<reference key="1">
    <citation type="journal article" date="1992" name="Gene">
        <title>Sequence analysis of a second cDNA encoding Atlantic salmon (Salmo salar) serum albumin.</title>
        <authorList>
            <person name="Byrnes L."/>
            <person name="Gannon F."/>
        </authorList>
    </citation>
    <scope>NUCLEOTIDE SEQUENCE [MRNA]</scope>
    <source>
        <tissue>Liver</tissue>
    </source>
</reference>
<comment type="function">
    <text>Binds water, Ca(2+), Na(+), K(+), fatty acids, hormones, bilirubin and drugs. Its main function is the regulation of the colloidal osmotic pressure of blood.</text>
</comment>
<comment type="subcellular location">
    <subcellularLocation>
        <location>Secreted</location>
    </subcellularLocation>
</comment>
<comment type="tissue specificity">
    <text>Plasma.</text>
</comment>
<comment type="similarity">
    <text evidence="2">Belongs to the ALB/AFP/VDB family.</text>
</comment>
<keyword id="KW-1015">Disulfide bond</keyword>
<keyword id="KW-0325">Glycoprotein</keyword>
<keyword id="KW-0446">Lipid-binding</keyword>
<keyword id="KW-0479">Metal-binding</keyword>
<keyword id="KW-1185">Reference proteome</keyword>
<keyword id="KW-0677">Repeat</keyword>
<keyword id="KW-0964">Secreted</keyword>
<keyword id="KW-0732">Signal</keyword>
<organism>
    <name type="scientific">Salmo salar</name>
    <name type="common">Atlantic salmon</name>
    <dbReference type="NCBI Taxonomy" id="8030"/>
    <lineage>
        <taxon>Eukaryota</taxon>
        <taxon>Metazoa</taxon>
        <taxon>Chordata</taxon>
        <taxon>Craniata</taxon>
        <taxon>Vertebrata</taxon>
        <taxon>Euteleostomi</taxon>
        <taxon>Actinopterygii</taxon>
        <taxon>Neopterygii</taxon>
        <taxon>Teleostei</taxon>
        <taxon>Protacanthopterygii</taxon>
        <taxon>Salmoniformes</taxon>
        <taxon>Salmonidae</taxon>
        <taxon>Salmoninae</taxon>
        <taxon>Salmo</taxon>
    </lineage>
</organism>
<proteinExistence type="evidence at transcript level"/>
<evidence type="ECO:0000255" key="1"/>
<evidence type="ECO:0000255" key="2">
    <source>
        <dbReference type="PROSITE-ProRule" id="PRU00769"/>
    </source>
</evidence>
<protein>
    <recommendedName>
        <fullName>Albumin 2</fullName>
    </recommendedName>
</protein>
<feature type="signal peptide" evidence="1">
    <location>
        <begin position="1"/>
        <end position="14"/>
    </location>
</feature>
<feature type="propeptide" id="PRO_0000001087">
    <location>
        <begin position="15"/>
        <end position="18"/>
    </location>
</feature>
<feature type="chain" id="PRO_0000001088" description="Albumin 2">
    <location>
        <begin position="19"/>
        <end position="608"/>
    </location>
</feature>
<feature type="domain" description="Albumin 1" evidence="2">
    <location>
        <begin position="19"/>
        <end position="205"/>
    </location>
</feature>
<feature type="domain" description="Albumin 2" evidence="2">
    <location>
        <begin position="206"/>
        <end position="398"/>
    </location>
</feature>
<feature type="domain" description="Albumin 3" evidence="2">
    <location>
        <begin position="402"/>
        <end position="600"/>
    </location>
</feature>
<feature type="glycosylation site" description="N-linked (GlcNAc...) asparagine" evidence="1">
    <location>
        <position position="501"/>
    </location>
</feature>
<feature type="disulfide bond" evidence="2">
    <location>
        <begin position="26"/>
        <end position="72"/>
    </location>
</feature>
<feature type="disulfide bond" evidence="2">
    <location>
        <begin position="71"/>
        <end position="80"/>
    </location>
</feature>
<feature type="disulfide bond" evidence="2">
    <location>
        <begin position="93"/>
        <end position="108"/>
    </location>
</feature>
<feature type="disulfide bond" evidence="2">
    <location>
        <begin position="107"/>
        <end position="118"/>
    </location>
</feature>
<feature type="disulfide bond" evidence="2">
    <location>
        <begin position="142"/>
        <end position="187"/>
    </location>
</feature>
<feature type="disulfide bond" evidence="2">
    <location>
        <begin position="186"/>
        <end position="195"/>
    </location>
</feature>
<feature type="disulfide bond" evidence="2">
    <location>
        <begin position="218"/>
        <end position="264"/>
    </location>
</feature>
<feature type="disulfide bond" evidence="2">
    <location>
        <begin position="263"/>
        <end position="271"/>
    </location>
</feature>
<feature type="disulfide bond" evidence="2">
    <location>
        <begin position="283"/>
        <end position="299"/>
    </location>
</feature>
<feature type="disulfide bond" evidence="2">
    <location>
        <begin position="298"/>
        <end position="309"/>
    </location>
</feature>
<feature type="disulfide bond" evidence="2">
    <location>
        <begin position="336"/>
        <end position="381"/>
    </location>
</feature>
<feature type="disulfide bond" evidence="2">
    <location>
        <begin position="380"/>
        <end position="389"/>
    </location>
</feature>
<feature type="disulfide bond" evidence="2">
    <location>
        <begin position="414"/>
        <end position="460"/>
    </location>
</feature>
<feature type="disulfide bond" evidence="2">
    <location>
        <begin position="459"/>
        <end position="471"/>
    </location>
</feature>
<feature type="disulfide bond" evidence="2">
    <location>
        <begin position="484"/>
        <end position="500"/>
    </location>
</feature>
<feature type="disulfide bond" evidence="2">
    <location>
        <begin position="499"/>
        <end position="510"/>
    </location>
</feature>
<feature type="disulfide bond" evidence="2">
    <location>
        <begin position="537"/>
        <end position="582"/>
    </location>
</feature>
<feature type="disulfide bond" evidence="2">
    <location>
        <begin position="581"/>
        <end position="590"/>
    </location>
</feature>
<dbReference type="EMBL" id="X60776">
    <property type="protein sequence ID" value="CAA43187.1"/>
    <property type="molecule type" value="mRNA"/>
</dbReference>
<dbReference type="PIR" id="A46757">
    <property type="entry name" value="ABONS2"/>
</dbReference>
<dbReference type="RefSeq" id="NP_001117164.1">
    <property type="nucleotide sequence ID" value="NM_001123692.1"/>
</dbReference>
<dbReference type="SMR" id="Q03156"/>
<dbReference type="GlyCosmos" id="Q03156">
    <property type="glycosylation" value="1 site, No reported glycans"/>
</dbReference>
<dbReference type="Ensembl" id="ENSSSAT00070004246">
    <property type="protein sequence ID" value="ENSSSAP00070003901"/>
    <property type="gene ID" value="ENSSSAG00070002974"/>
</dbReference>
<dbReference type="GeneID" id="100136922"/>
<dbReference type="KEGG" id="sasa:100136922"/>
<dbReference type="Proteomes" id="UP000087266">
    <property type="component" value="Chromosome ssa18"/>
</dbReference>
<dbReference type="GO" id="GO:0072562">
    <property type="term" value="C:blood microparticle"/>
    <property type="evidence" value="ECO:0007669"/>
    <property type="project" value="TreeGrafter"/>
</dbReference>
<dbReference type="GO" id="GO:0005737">
    <property type="term" value="C:cytoplasm"/>
    <property type="evidence" value="ECO:0007669"/>
    <property type="project" value="TreeGrafter"/>
</dbReference>
<dbReference type="GO" id="GO:0008289">
    <property type="term" value="F:lipid binding"/>
    <property type="evidence" value="ECO:0007669"/>
    <property type="project" value="UniProtKB-KW"/>
</dbReference>
<dbReference type="GO" id="GO:0046872">
    <property type="term" value="F:metal ion binding"/>
    <property type="evidence" value="ECO:0007669"/>
    <property type="project" value="UniProtKB-KW"/>
</dbReference>
<dbReference type="CDD" id="cd00015">
    <property type="entry name" value="ALBUMIN"/>
    <property type="match status" value="3"/>
</dbReference>
<dbReference type="Gene3D" id="1.10.246.10">
    <property type="match status" value="6"/>
</dbReference>
<dbReference type="InterPro" id="IPR000264">
    <property type="entry name" value="ALB/AFP/VDB"/>
</dbReference>
<dbReference type="InterPro" id="IPR020858">
    <property type="entry name" value="Serum_albumin-like"/>
</dbReference>
<dbReference type="InterPro" id="IPR021177">
    <property type="entry name" value="Serum_albumin/AFP/Afamin"/>
</dbReference>
<dbReference type="InterPro" id="IPR020857">
    <property type="entry name" value="Serum_albumin_CS"/>
</dbReference>
<dbReference type="InterPro" id="IPR014760">
    <property type="entry name" value="Serum_albumin_N"/>
</dbReference>
<dbReference type="PANTHER" id="PTHR11385:SF14">
    <property type="entry name" value="AFAMIN"/>
    <property type="match status" value="1"/>
</dbReference>
<dbReference type="PANTHER" id="PTHR11385">
    <property type="entry name" value="SERUM ALBUMIN-RELATED"/>
    <property type="match status" value="1"/>
</dbReference>
<dbReference type="Pfam" id="PF00273">
    <property type="entry name" value="Serum_albumin"/>
    <property type="match status" value="3"/>
</dbReference>
<dbReference type="PIRSF" id="PIRSF002520">
    <property type="entry name" value="Serum_albumin_subgroup"/>
    <property type="match status" value="1"/>
</dbReference>
<dbReference type="PRINTS" id="PR00802">
    <property type="entry name" value="SERUMALBUMIN"/>
</dbReference>
<dbReference type="SMART" id="SM00103">
    <property type="entry name" value="ALBUMIN"/>
    <property type="match status" value="3"/>
</dbReference>
<dbReference type="SUPFAM" id="SSF48552">
    <property type="entry name" value="Serum albumin-like"/>
    <property type="match status" value="3"/>
</dbReference>
<dbReference type="PROSITE" id="PS00212">
    <property type="entry name" value="ALBUMIN_1"/>
    <property type="match status" value="2"/>
</dbReference>
<dbReference type="PROSITE" id="PS51438">
    <property type="entry name" value="ALBUMIN_2"/>
    <property type="match status" value="3"/>
</dbReference>
<gene>
    <name type="primary">alb2</name>
</gene>
<sequence>MQWLSVCSLLVLLSVLSRSQAQNQICTIFTEAKEDGFKSLILVGLAQNLPDSTLGDLVPLIAEALAMGVKCCSDTPPEDCERDVADLFQSAVCSSETLVEKNDLKMCCEKTAAERTHCFVDHKAKIPRDLSLKAELPAADQCEDFKKDHKAFVGRFIFKFSKSNPMLPPHVVLAIAKGYGEVLTTCCGEAEAQTCFDTKKATFQHAIAKRVAELKSLCIVHKKYGDRVVKAKKLVQYSQKMPQASFQEMAGMVDKIVATVAPCCSGDMVTCMKERKTLVDEVCADESVLSRAAGLSACCKEDAVHRGSCVEAMKPDPKPDGLSEHYDVHADIAAVCQTFTKTPDVAMGKLVYEISVRHPESSQQVILRFAKEAEQALLQCCDMEDHAECVKTALAGSDIDKKITDETDYYKKMCAAEAAVSDDNFEKSMMVYYTRIMPQASFDQLHMVSETVHDVLHACCKDEPGHFVLPCAEEKLTDAIDATCDDYDPSSINPHIAHCCNQSYSMRRHCILAIQPDTEFTPPELDASSFHMGPELCTKDSKDLLLSGKKLLYGVVRHKTTITEDHLKTISTKYHTMKDKCCAAEDQAACFTEEAPKLVSESAELVKV</sequence>
<accession>Q03156</accession>
<name>ALBU2_SALSA</name>